<protein>
    <recommendedName>
        <fullName evidence="1">Mitochondrial distribution and morphology protein 10</fullName>
    </recommendedName>
    <alternativeName>
        <fullName evidence="1">Mitochondrial inheritance component mdm10</fullName>
    </alternativeName>
</protein>
<sequence length="427" mass="46345">MLDFMDYIQLAFAEGTQRNCDNSYSSLTATTQNLLDFTTPERVRIHLSSLSTPNFATSYTLGTVGLIEGSISYLYSNISFDNTPSKSALIPLRKLAPGYRQVQAPIAPPSSKGQKATLLHATLHLPPPTTLNALFLRRISPTMQLSLAVSSTRGPPLSKSAPQATLLTQLTHDTGKYSNEYLFSTDNSLFGWRGLWNFGPDPRFNNNAQRLSLLSAGAEAYYSPVSSLIGMSTGLRFCTLPAATSSTPNPNTPISTFPYTLTLTLTPLTGSLSTSYSVRASPNLSFSSRFGFNVYSWESEMVAGFELWRQSRKAAIVDNDGLEWARNKARIWDIPASSQVPEPITPSEEETQESVLKVRVDQSWNVRLLWEGRVKELLVSAGVGLGPSSFSPSSYANSQATAGAQGSSGGPPTSYWRGVGVSVSYSS</sequence>
<comment type="function">
    <text evidence="1 3">Component of the ERMES/MDM complex, which serves as a molecular tether to connect the endoplasmic reticulum and mitochondria. Components of this complex are involved in the control of mitochondrial shape and protein biogenesis and may function in phospholipid exchange. mdm10 is involved in the late assembly steps of the general translocase of the mitochondrial outer membrane (TOM complex). Functions in the tom40-specific route of the assembly of outer membrane beta-barrel proteins, including the association of tom40 with the receptor tom22 and small TOM proteins. Can associate with the SAM(core) complex as well as the mdm12-mmm1 complex, both involved in late steps of the major beta-barrel assembly pathway, that is responsible for biogenesis of all outer membrane beta-barrel proteins. May act as a switch that shuttles between both complexes and channels precursor proteins into the tom40-specific pathway. Plays a role in mitochondrial morphology and in the inheritance of mitochondria.</text>
</comment>
<comment type="subunit">
    <text evidence="1">Component of the ER-mitochondria encounter structure (ERMES) or MDM complex, composed of mmm1, mdm10, mdm12 and mdm34. Associates with the mitochondrial outer membrane sorting assembly machinery SAM(core) complex.</text>
</comment>
<comment type="subcellular location">
    <subcellularLocation>
        <location evidence="1">Mitochondrion outer membrane</location>
        <topology evidence="1">Multi-pass membrane protein</topology>
    </subcellularLocation>
    <text evidence="1">The ERMES/MDM complex localizes to a few discrete foci (around 10 per single cell), that represent mitochondria-endoplasmic reticulum junctions. These foci are often found next to mtDNA nucleoids.</text>
</comment>
<comment type="domain">
    <text>Lacks alpha-helical transmembrane segments, suggesting that it resides in the membrane via beta-sheet conformations similar to those predicted for other outer membrane proteins and porin.</text>
</comment>
<comment type="similarity">
    <text evidence="1">Belongs to the MDM10 family.</text>
</comment>
<accession>Q8J0L4</accession>
<accession>C8V2X8</accession>
<accession>Q5AXS9</accession>
<proteinExistence type="inferred from homology"/>
<evidence type="ECO:0000255" key="1">
    <source>
        <dbReference type="HAMAP-Rule" id="MF_03102"/>
    </source>
</evidence>
<evidence type="ECO:0000256" key="2">
    <source>
        <dbReference type="SAM" id="MobiDB-lite"/>
    </source>
</evidence>
<evidence type="ECO:0000269" key="3">
    <source>
    </source>
</evidence>
<feature type="chain" id="PRO_0000384179" description="Mitochondrial distribution and morphology protein 10">
    <location>
        <begin position="1"/>
        <end position="427"/>
    </location>
</feature>
<feature type="region of interest" description="Disordered" evidence="2">
    <location>
        <begin position="393"/>
        <end position="427"/>
    </location>
</feature>
<feature type="compositionally biased region" description="Low complexity" evidence="2">
    <location>
        <begin position="393"/>
        <end position="414"/>
    </location>
</feature>
<keyword id="KW-0472">Membrane</keyword>
<keyword id="KW-0496">Mitochondrion</keyword>
<keyword id="KW-1000">Mitochondrion outer membrane</keyword>
<keyword id="KW-1185">Reference proteome</keyword>
<keyword id="KW-0812">Transmembrane</keyword>
<keyword id="KW-1134">Transmembrane beta strand</keyword>
<name>MDM10_EMENI</name>
<reference key="1">
    <citation type="journal article" date="2003" name="Cell Motil. Cytoskeleton">
        <title>Deletion of mdmB impairs mitochondrial distribution and morphology in Aspergillus nidulans.</title>
        <authorList>
            <person name="Koch K.V."/>
            <person name="Suelmann R."/>
            <person name="Fischer R."/>
        </authorList>
    </citation>
    <scope>NUCLEOTIDE SEQUENCE [GENOMIC DNA]</scope>
    <scope>SUBCELLULAR LOCATION</scope>
    <scope>FUNCTION</scope>
</reference>
<reference key="2">
    <citation type="journal article" date="2005" name="Nature">
        <title>Sequencing of Aspergillus nidulans and comparative analysis with A. fumigatus and A. oryzae.</title>
        <authorList>
            <person name="Galagan J.E."/>
            <person name="Calvo S.E."/>
            <person name="Cuomo C."/>
            <person name="Ma L.-J."/>
            <person name="Wortman J.R."/>
            <person name="Batzoglou S."/>
            <person name="Lee S.-I."/>
            <person name="Bastuerkmen M."/>
            <person name="Spevak C.C."/>
            <person name="Clutterbuck J."/>
            <person name="Kapitonov V."/>
            <person name="Jurka J."/>
            <person name="Scazzocchio C."/>
            <person name="Farman M.L."/>
            <person name="Butler J."/>
            <person name="Purcell S."/>
            <person name="Harris S."/>
            <person name="Braus G.H."/>
            <person name="Draht O."/>
            <person name="Busch S."/>
            <person name="D'Enfert C."/>
            <person name="Bouchier C."/>
            <person name="Goldman G.H."/>
            <person name="Bell-Pedersen D."/>
            <person name="Griffiths-Jones S."/>
            <person name="Doonan J.H."/>
            <person name="Yu J."/>
            <person name="Vienken K."/>
            <person name="Pain A."/>
            <person name="Freitag M."/>
            <person name="Selker E.U."/>
            <person name="Archer D.B."/>
            <person name="Penalva M.A."/>
            <person name="Oakley B.R."/>
            <person name="Momany M."/>
            <person name="Tanaka T."/>
            <person name="Kumagai T."/>
            <person name="Asai K."/>
            <person name="Machida M."/>
            <person name="Nierman W.C."/>
            <person name="Denning D.W."/>
            <person name="Caddick M.X."/>
            <person name="Hynes M."/>
            <person name="Paoletti M."/>
            <person name="Fischer R."/>
            <person name="Miller B.L."/>
            <person name="Dyer P.S."/>
            <person name="Sachs M.S."/>
            <person name="Osmani S.A."/>
            <person name="Birren B.W."/>
        </authorList>
    </citation>
    <scope>NUCLEOTIDE SEQUENCE [LARGE SCALE GENOMIC DNA]</scope>
    <source>
        <strain>FGSC A4 / ATCC 38163 / CBS 112.46 / NRRL 194 / M139</strain>
    </source>
</reference>
<reference key="3">
    <citation type="journal article" date="2009" name="Fungal Genet. Biol.">
        <title>The 2008 update of the Aspergillus nidulans genome annotation: a community effort.</title>
        <authorList>
            <person name="Wortman J.R."/>
            <person name="Gilsenan J.M."/>
            <person name="Joardar V."/>
            <person name="Deegan J."/>
            <person name="Clutterbuck J."/>
            <person name="Andersen M.R."/>
            <person name="Archer D."/>
            <person name="Bencina M."/>
            <person name="Braus G."/>
            <person name="Coutinho P."/>
            <person name="von Dohren H."/>
            <person name="Doonan J."/>
            <person name="Driessen A.J."/>
            <person name="Durek P."/>
            <person name="Espeso E."/>
            <person name="Fekete E."/>
            <person name="Flipphi M."/>
            <person name="Estrada C.G."/>
            <person name="Geysens S."/>
            <person name="Goldman G."/>
            <person name="de Groot P.W."/>
            <person name="Hansen K."/>
            <person name="Harris S.D."/>
            <person name="Heinekamp T."/>
            <person name="Helmstaedt K."/>
            <person name="Henrissat B."/>
            <person name="Hofmann G."/>
            <person name="Homan T."/>
            <person name="Horio T."/>
            <person name="Horiuchi H."/>
            <person name="James S."/>
            <person name="Jones M."/>
            <person name="Karaffa L."/>
            <person name="Karanyi Z."/>
            <person name="Kato M."/>
            <person name="Keller N."/>
            <person name="Kelly D.E."/>
            <person name="Kiel J.A."/>
            <person name="Kim J.M."/>
            <person name="van der Klei I.J."/>
            <person name="Klis F.M."/>
            <person name="Kovalchuk A."/>
            <person name="Krasevec N."/>
            <person name="Kubicek C.P."/>
            <person name="Liu B."/>
            <person name="Maccabe A."/>
            <person name="Meyer V."/>
            <person name="Mirabito P."/>
            <person name="Miskei M."/>
            <person name="Mos M."/>
            <person name="Mullins J."/>
            <person name="Nelson D.R."/>
            <person name="Nielsen J."/>
            <person name="Oakley B.R."/>
            <person name="Osmani S.A."/>
            <person name="Pakula T."/>
            <person name="Paszewski A."/>
            <person name="Paulsen I."/>
            <person name="Pilsyk S."/>
            <person name="Pocsi I."/>
            <person name="Punt P.J."/>
            <person name="Ram A.F."/>
            <person name="Ren Q."/>
            <person name="Robellet X."/>
            <person name="Robson G."/>
            <person name="Seiboth B."/>
            <person name="van Solingen P."/>
            <person name="Specht T."/>
            <person name="Sun J."/>
            <person name="Taheri-Talesh N."/>
            <person name="Takeshita N."/>
            <person name="Ussery D."/>
            <person name="vanKuyk P.A."/>
            <person name="Visser H."/>
            <person name="van de Vondervoort P.J."/>
            <person name="de Vries R.P."/>
            <person name="Walton J."/>
            <person name="Xiang X."/>
            <person name="Xiong Y."/>
            <person name="Zeng A.P."/>
            <person name="Brandt B.W."/>
            <person name="Cornell M.J."/>
            <person name="van den Hondel C.A."/>
            <person name="Visser J."/>
            <person name="Oliver S.G."/>
            <person name="Turner G."/>
        </authorList>
    </citation>
    <scope>GENOME REANNOTATION</scope>
    <source>
        <strain>FGSC A4 / ATCC 38163 / CBS 112.46 / NRRL 194 / M139</strain>
    </source>
</reference>
<organism>
    <name type="scientific">Emericella nidulans (strain FGSC A4 / ATCC 38163 / CBS 112.46 / NRRL 194 / M139)</name>
    <name type="common">Aspergillus nidulans</name>
    <dbReference type="NCBI Taxonomy" id="227321"/>
    <lineage>
        <taxon>Eukaryota</taxon>
        <taxon>Fungi</taxon>
        <taxon>Dikarya</taxon>
        <taxon>Ascomycota</taxon>
        <taxon>Pezizomycotina</taxon>
        <taxon>Eurotiomycetes</taxon>
        <taxon>Eurotiomycetidae</taxon>
        <taxon>Eurotiales</taxon>
        <taxon>Aspergillaceae</taxon>
        <taxon>Aspergillus</taxon>
        <taxon>Aspergillus subgen. Nidulantes</taxon>
    </lineage>
</organism>
<dbReference type="EMBL" id="AJ536057">
    <property type="protein sequence ID" value="CAD59923.1"/>
    <property type="molecule type" value="Genomic_DNA"/>
</dbReference>
<dbReference type="EMBL" id="AACD01000113">
    <property type="protein sequence ID" value="EAA58300.1"/>
    <property type="molecule type" value="Genomic_DNA"/>
</dbReference>
<dbReference type="EMBL" id="BN001301">
    <property type="protein sequence ID" value="CBF71692.1"/>
    <property type="molecule type" value="Genomic_DNA"/>
</dbReference>
<dbReference type="RefSeq" id="XP_664505.1">
    <property type="nucleotide sequence ID" value="XM_659413.1"/>
</dbReference>
<dbReference type="SMR" id="Q8J0L4"/>
<dbReference type="FunCoup" id="Q8J0L4">
    <property type="interactions" value="51"/>
</dbReference>
<dbReference type="STRING" id="227321.Q8J0L4"/>
<dbReference type="EnsemblFungi" id="CBF71692">
    <property type="protein sequence ID" value="CBF71692"/>
    <property type="gene ID" value="ANIA_06901"/>
</dbReference>
<dbReference type="GeneID" id="2870608"/>
<dbReference type="KEGG" id="ani:ANIA_06901"/>
<dbReference type="eggNOG" id="ENOG502QUN5">
    <property type="taxonomic scope" value="Eukaryota"/>
</dbReference>
<dbReference type="HOGENOM" id="CLU_026505_1_0_1"/>
<dbReference type="InParanoid" id="Q8J0L4"/>
<dbReference type="OMA" id="VPGYRQI"/>
<dbReference type="OrthoDB" id="2103793at2759"/>
<dbReference type="Proteomes" id="UP000000560">
    <property type="component" value="Chromosome I"/>
</dbReference>
<dbReference type="GO" id="GO:0032865">
    <property type="term" value="C:ERMES complex"/>
    <property type="evidence" value="ECO:0000318"/>
    <property type="project" value="GO_Central"/>
</dbReference>
<dbReference type="GO" id="GO:0001401">
    <property type="term" value="C:SAM complex"/>
    <property type="evidence" value="ECO:0000318"/>
    <property type="project" value="GO_Central"/>
</dbReference>
<dbReference type="GO" id="GO:0051654">
    <property type="term" value="P:establishment of mitochondrion localization"/>
    <property type="evidence" value="ECO:0000318"/>
    <property type="project" value="GO_Central"/>
</dbReference>
<dbReference type="GO" id="GO:0000002">
    <property type="term" value="P:mitochondrial genome maintenance"/>
    <property type="evidence" value="ECO:0007669"/>
    <property type="project" value="UniProtKB-UniRule"/>
</dbReference>
<dbReference type="GO" id="GO:0070096">
    <property type="term" value="P:mitochondrial outer membrane translocase complex assembly"/>
    <property type="evidence" value="ECO:0000318"/>
    <property type="project" value="GO_Central"/>
</dbReference>
<dbReference type="GO" id="GO:1990456">
    <property type="term" value="P:mitochondrion-endoplasmic reticulum membrane tethering"/>
    <property type="evidence" value="ECO:0000318"/>
    <property type="project" value="GO_Central"/>
</dbReference>
<dbReference type="GO" id="GO:0015914">
    <property type="term" value="P:phospholipid transport"/>
    <property type="evidence" value="ECO:0000318"/>
    <property type="project" value="GO_Central"/>
</dbReference>
<dbReference type="GO" id="GO:0045040">
    <property type="term" value="P:protein insertion into mitochondrial outer membrane"/>
    <property type="evidence" value="ECO:0000318"/>
    <property type="project" value="GO_Central"/>
</dbReference>
<dbReference type="HAMAP" id="MF_03102">
    <property type="entry name" value="Mdm10"/>
    <property type="match status" value="1"/>
</dbReference>
<dbReference type="InterPro" id="IPR027539">
    <property type="entry name" value="Mdm10"/>
</dbReference>
<dbReference type="PANTHER" id="PTHR28035">
    <property type="entry name" value="MITOCHONDRIAL DISTRIBUTION AND MORPHOLOGY PROTEIN 10"/>
    <property type="match status" value="1"/>
</dbReference>
<dbReference type="PANTHER" id="PTHR28035:SF1">
    <property type="entry name" value="MITOCHONDRIAL DISTRIBUTION AND MORPHOLOGY PROTEIN 10"/>
    <property type="match status" value="1"/>
</dbReference>
<dbReference type="Pfam" id="PF12519">
    <property type="entry name" value="MDM10"/>
    <property type="match status" value="2"/>
</dbReference>
<gene>
    <name type="primary">mdmB</name>
    <name type="synonym">mdm10</name>
    <name type="ORF">AN6901</name>
</gene>